<accession>A7ZPA8</accession>
<reference key="1">
    <citation type="journal article" date="2008" name="J. Bacteriol.">
        <title>The pangenome structure of Escherichia coli: comparative genomic analysis of E. coli commensal and pathogenic isolates.</title>
        <authorList>
            <person name="Rasko D.A."/>
            <person name="Rosovitz M.J."/>
            <person name="Myers G.S.A."/>
            <person name="Mongodin E.F."/>
            <person name="Fricke W.F."/>
            <person name="Gajer P."/>
            <person name="Crabtree J."/>
            <person name="Sebaihia M."/>
            <person name="Thomson N.R."/>
            <person name="Chaudhuri R."/>
            <person name="Henderson I.R."/>
            <person name="Sperandio V."/>
            <person name="Ravel J."/>
        </authorList>
    </citation>
    <scope>NUCLEOTIDE SEQUENCE [LARGE SCALE GENOMIC DNA]</scope>
    <source>
        <strain>E24377A / ETEC</strain>
    </source>
</reference>
<gene>
    <name evidence="1" type="primary">yfbU</name>
    <name type="ordered locus">EcE24377A_2587</name>
</gene>
<organism>
    <name type="scientific">Escherichia coli O139:H28 (strain E24377A / ETEC)</name>
    <dbReference type="NCBI Taxonomy" id="331111"/>
    <lineage>
        <taxon>Bacteria</taxon>
        <taxon>Pseudomonadati</taxon>
        <taxon>Pseudomonadota</taxon>
        <taxon>Gammaproteobacteria</taxon>
        <taxon>Enterobacterales</taxon>
        <taxon>Enterobacteriaceae</taxon>
        <taxon>Escherichia</taxon>
    </lineage>
</organism>
<proteinExistence type="inferred from homology"/>
<name>YFBU_ECO24</name>
<evidence type="ECO:0000255" key="1">
    <source>
        <dbReference type="HAMAP-Rule" id="MF_00762"/>
    </source>
</evidence>
<protein>
    <recommendedName>
        <fullName evidence="1">UPF0304 protein YfbU</fullName>
    </recommendedName>
</protein>
<sequence>MEMTNAQRLILSNQYKMMTMLDPANAERYRRLQTIIERGYGLQMRELDREFGELKEETCRTIIDIMEMYHALHVSWSNLQDQQSIDERRVTFLGFDAATEARYLGYVRFMVNVEGRYTHFYAGTHGFNAQTPMWEKYQRMLNVWHACPRQYHLSANEINQIINA</sequence>
<keyword id="KW-1185">Reference proteome</keyword>
<dbReference type="EMBL" id="CP000800">
    <property type="protein sequence ID" value="ABV18680.1"/>
    <property type="molecule type" value="Genomic_DNA"/>
</dbReference>
<dbReference type="RefSeq" id="WP_000426126.1">
    <property type="nucleotide sequence ID" value="NC_009801.1"/>
</dbReference>
<dbReference type="SMR" id="A7ZPA8"/>
<dbReference type="KEGG" id="ecw:EcE24377A_2587"/>
<dbReference type="HOGENOM" id="CLU_101021_1_0_6"/>
<dbReference type="Proteomes" id="UP000001122">
    <property type="component" value="Chromosome"/>
</dbReference>
<dbReference type="FunFam" id="1.10.3190.10:FF:000001">
    <property type="entry name" value="UPF0304 protein YfbU"/>
    <property type="match status" value="1"/>
</dbReference>
<dbReference type="Gene3D" id="1.10.287.680">
    <property type="entry name" value="Helix hairpin bin"/>
    <property type="match status" value="1"/>
</dbReference>
<dbReference type="Gene3D" id="1.10.3190.10">
    <property type="entry name" value="yfbu gene product, domain 2"/>
    <property type="match status" value="1"/>
</dbReference>
<dbReference type="HAMAP" id="MF_00762">
    <property type="entry name" value="UPF0304"/>
    <property type="match status" value="1"/>
</dbReference>
<dbReference type="InterPro" id="IPR005587">
    <property type="entry name" value="UPF0304_YfbU"/>
</dbReference>
<dbReference type="InterPro" id="IPR023146">
    <property type="entry name" value="YfbU_alpha-helical_sf"/>
</dbReference>
<dbReference type="InterPro" id="IPR023145">
    <property type="entry name" value="YfbU_helix-hairpin_sf"/>
</dbReference>
<dbReference type="NCBIfam" id="NF003936">
    <property type="entry name" value="PRK05445.1"/>
    <property type="match status" value="1"/>
</dbReference>
<dbReference type="Pfam" id="PF03887">
    <property type="entry name" value="YfbU"/>
    <property type="match status" value="1"/>
</dbReference>
<dbReference type="PIRSF" id="PIRSF006272">
    <property type="entry name" value="UCP006272"/>
    <property type="match status" value="1"/>
</dbReference>
<dbReference type="SUPFAM" id="SSF116960">
    <property type="entry name" value="YfbU-like"/>
    <property type="match status" value="1"/>
</dbReference>
<comment type="similarity">
    <text evidence="1">Belongs to the UPF0304 family.</text>
</comment>
<feature type="chain" id="PRO_1000062209" description="UPF0304 protein YfbU">
    <location>
        <begin position="1"/>
        <end position="164"/>
    </location>
</feature>